<proteinExistence type="evidence at protein level"/>
<evidence type="ECO:0000255" key="1"/>
<evidence type="ECO:0000256" key="2">
    <source>
        <dbReference type="SAM" id="MobiDB-lite"/>
    </source>
</evidence>
<evidence type="ECO:0000269" key="3">
    <source>
    </source>
</evidence>
<evidence type="ECO:0000269" key="4">
    <source>
    </source>
</evidence>
<evidence type="ECO:0000303" key="5">
    <source>
    </source>
</evidence>
<evidence type="ECO:0000303" key="6">
    <source>
    </source>
</evidence>
<evidence type="ECO:0000303" key="7">
    <source>
    </source>
</evidence>
<evidence type="ECO:0000305" key="8"/>
<evidence type="ECO:0000305" key="9">
    <source>
    </source>
</evidence>
<evidence type="ECO:0000312" key="10">
    <source>
        <dbReference type="HGNC" id="HGNC:24820"/>
    </source>
</evidence>
<evidence type="ECO:0007744" key="11">
    <source>
    </source>
</evidence>
<comment type="function">
    <text evidence="3">Functions as an activator of the E3 ubiquitin protein ligase ITCH in the ubiquitination of the CXCL12-activated CXCR4 receptor. Thereby, triggers CXCR4 endocytosis and desensitization, negatively regulating the CXCL12/CXCR4 signaling pathway.</text>
</comment>
<comment type="subunit">
    <text evidence="3">Interacts with ITCH; enhances the ubiquitination of CXCR4 by ITCH and the subsequent endocytosis and desensitization of the receptor (PubMed:34927784). Interacts with EPN1 (PubMed:34927784).</text>
</comment>
<comment type="interaction">
    <interactant intactId="EBI-8636612">
        <id>Q15884</id>
    </interactant>
    <interactant intactId="EBI-947028">
        <id>Q6ZTN6</id>
        <label>ANKRD13D</label>
    </interactant>
    <organismsDiffer>false</organismsDiffer>
    <experiments>3</experiments>
</comment>
<comment type="interaction">
    <interactant intactId="EBI-8636612">
        <id>Q15884</id>
    </interactant>
    <interactant intactId="EBI-713198">
        <id>Q9Y6I3</id>
        <label>EPN1</label>
    </interactant>
    <organismsDiffer>false</organismsDiffer>
    <experiments>5</experiments>
</comment>
<comment type="interaction">
    <interactant intactId="EBI-8636612">
        <id>Q15884</id>
    </interactant>
    <interactant intactId="EBI-6946802">
        <id>Q9P2P5</id>
        <label>HECW2</label>
    </interactant>
    <organismsDiffer>false</organismsDiffer>
    <experiments>4</experiments>
</comment>
<comment type="interaction">
    <interactant intactId="EBI-8636612">
        <id>Q15884</id>
    </interactant>
    <interactant intactId="EBI-1564678">
        <id>Q96J02</id>
        <label>ITCH</label>
    </interactant>
    <organismsDiffer>false</organismsDiffer>
    <experiments>4</experiments>
</comment>
<comment type="interaction">
    <interactant intactId="EBI-8636612">
        <id>Q15884</id>
    </interactant>
    <interactant intactId="EBI-6672198">
        <id>Q96J02-2</id>
        <label>ITCH</label>
    </interactant>
    <organismsDiffer>false</organismsDiffer>
    <experiments>6</experiments>
</comment>
<comment type="interaction">
    <interactant intactId="EBI-8636612">
        <id>Q15884</id>
    </interactant>
    <interactant intactId="EBI-726944">
        <id>P46934</id>
        <label>NEDD4</label>
    </interactant>
    <organismsDiffer>false</organismsDiffer>
    <experiments>4</experiments>
</comment>
<comment type="interaction">
    <interactant intactId="EBI-8636612">
        <id>Q15884</id>
    </interactant>
    <interactant intactId="EBI-717962">
        <id>Q96PU5</id>
        <label>NEDD4L</label>
    </interactant>
    <organismsDiffer>false</organismsDiffer>
    <experiments>4</experiments>
</comment>
<comment type="interaction">
    <interactant intactId="EBI-8636612">
        <id>Q15884</id>
    </interactant>
    <interactant intactId="EBI-2801983">
        <id>Q9H6A9</id>
        <label>PCNX3</label>
    </interactant>
    <organismsDiffer>false</organismsDiffer>
    <experiments>3</experiments>
</comment>
<comment type="interaction">
    <interactant intactId="EBI-8636612">
        <id>Q15884</id>
    </interactant>
    <interactant intactId="EBI-742157">
        <id>Q9H0M0</id>
        <label>WWP1</label>
    </interactant>
    <organismsDiffer>false</organismsDiffer>
    <experiments>3</experiments>
</comment>
<comment type="interaction">
    <interactant intactId="EBI-8636612">
        <id>Q15884</id>
    </interactant>
    <interactant intactId="EBI-743923">
        <id>O00308</id>
        <label>WWP2</label>
    </interactant>
    <organismsDiffer>false</organismsDiffer>
    <experiments>6</experiments>
</comment>
<comment type="interaction">
    <interactant intactId="EBI-8636612">
        <id>Q15884</id>
    </interactant>
    <interactant intactId="EBI-347088">
        <id>P63104</id>
        <label>YWHAZ</label>
    </interactant>
    <organismsDiffer>false</organismsDiffer>
    <experiments>4</experiments>
</comment>
<comment type="subcellular location">
    <subcellularLocation>
        <location evidence="3">Early endosome membrane</location>
        <topology evidence="1">Single-pass type I membrane protein</topology>
    </subcellularLocation>
    <subcellularLocation>
        <location evidence="3">Late endosome membrane</location>
        <topology evidence="1">Single-pass type I membrane protein</topology>
    </subcellularLocation>
    <subcellularLocation>
        <location evidence="3">Recycling endosome membrane</location>
        <topology evidence="1">Single-pass type I membrane protein</topology>
    </subcellularLocation>
    <subcellularLocation>
        <location evidence="3">Cell membrane</location>
        <topology evidence="1">Single-pass type I membrane protein</topology>
    </subcellularLocation>
    <text evidence="3">Enriched in endosomes compared to the cell membrane.</text>
</comment>
<comment type="alternative products">
    <event type="alternative splicing"/>
    <isoform>
        <id>Q15884-3</id>
        <name>3</name>
        <name evidence="6">ENTREP</name>
        <sequence type="displayed"/>
    </isoform>
    <isoform>
        <id>Q15884-1</id>
        <name>1</name>
        <sequence type="described" ref="VSP_035737"/>
    </isoform>
    <isoform>
        <id>Q15884-4</id>
        <name>4</name>
        <sequence type="described" ref="VSP_061674"/>
    </isoform>
</comment>
<comment type="tissue specificity">
    <text evidence="4">Prominently expressed in muscle.</text>
</comment>
<comment type="domain">
    <text evidence="3">The cytoplasmic PPxY motifs mediate interaction with the WW domains of ITCH.</text>
</comment>
<comment type="PTM">
    <text evidence="3">Monoubiquitinated at Lys-274, Lys-329 and Lys-365 by ITCH.</text>
</comment>
<comment type="similarity">
    <text evidence="8">Belongs to the ENTREP family.</text>
</comment>
<comment type="sequence caution" evidence="8">
    <conflict type="miscellaneous discrepancy">
        <sequence resource="EMBL-CDS" id="AAA61301"/>
    </conflict>
    <text>Probable cloning artifact.</text>
</comment>
<reference key="1">
    <citation type="journal article" date="2022" name="EMBO Rep.">
        <title>ENTREP/FAM189A2 encodes a new ITCH ubiquitin ligase activator that is downregulated in breast cancer.</title>
        <authorList>
            <person name="Tsunoda T."/>
            <person name="Riku M."/>
            <person name="Yamada N."/>
            <person name="Tsuchiya H."/>
            <person name="Tomita T."/>
            <person name="Suzuki M."/>
            <person name="Kizuki M."/>
            <person name="Inoko A."/>
            <person name="Ito H."/>
            <person name="Murotani K."/>
            <person name="Murakami H."/>
            <person name="Saeki Y."/>
            <person name="Kasai K."/>
        </authorList>
    </citation>
    <scope>NUCLEOTIDE SEQUENCE [MRNA] (ISOFORM 3)</scope>
    <scope>FUNCTION</scope>
    <scope>INTERACTION WITH EPN1 AND ITCH</scope>
    <scope>SUBCELLULAR LOCATION</scope>
    <scope>TOPOLOGY</scope>
    <scope>DOMAIN</scope>
    <scope>UBIQUITINATION AT LYS-274; LYS-329 AND LYS-365</scope>
    <scope>MUTAGENESIS OF TYR-151 AND TYR-197</scope>
    <scope>REGION</scope>
    <scope>MOTIF</scope>
    <source>
        <tissue>Mammary gland</tissue>
    </source>
</reference>
<reference key="2">
    <citation type="journal article" date="2004" name="Nat. Genet.">
        <title>Complete sequencing and characterization of 21,243 full-length human cDNAs.</title>
        <authorList>
            <person name="Ota T."/>
            <person name="Suzuki Y."/>
            <person name="Nishikawa T."/>
            <person name="Otsuki T."/>
            <person name="Sugiyama T."/>
            <person name="Irie R."/>
            <person name="Wakamatsu A."/>
            <person name="Hayashi K."/>
            <person name="Sato H."/>
            <person name="Nagai K."/>
            <person name="Kimura K."/>
            <person name="Makita H."/>
            <person name="Sekine M."/>
            <person name="Obayashi M."/>
            <person name="Nishi T."/>
            <person name="Shibahara T."/>
            <person name="Tanaka T."/>
            <person name="Ishii S."/>
            <person name="Yamamoto J."/>
            <person name="Saito K."/>
            <person name="Kawai Y."/>
            <person name="Isono Y."/>
            <person name="Nakamura Y."/>
            <person name="Nagahari K."/>
            <person name="Murakami K."/>
            <person name="Yasuda T."/>
            <person name="Iwayanagi T."/>
            <person name="Wagatsuma M."/>
            <person name="Shiratori A."/>
            <person name="Sudo H."/>
            <person name="Hosoiri T."/>
            <person name="Kaku Y."/>
            <person name="Kodaira H."/>
            <person name="Kondo H."/>
            <person name="Sugawara M."/>
            <person name="Takahashi M."/>
            <person name="Kanda K."/>
            <person name="Yokoi T."/>
            <person name="Furuya T."/>
            <person name="Kikkawa E."/>
            <person name="Omura Y."/>
            <person name="Abe K."/>
            <person name="Kamihara K."/>
            <person name="Katsuta N."/>
            <person name="Sato K."/>
            <person name="Tanikawa M."/>
            <person name="Yamazaki M."/>
            <person name="Ninomiya K."/>
            <person name="Ishibashi T."/>
            <person name="Yamashita H."/>
            <person name="Murakawa K."/>
            <person name="Fujimori K."/>
            <person name="Tanai H."/>
            <person name="Kimata M."/>
            <person name="Watanabe M."/>
            <person name="Hiraoka S."/>
            <person name="Chiba Y."/>
            <person name="Ishida S."/>
            <person name="Ono Y."/>
            <person name="Takiguchi S."/>
            <person name="Watanabe S."/>
            <person name="Yosida M."/>
            <person name="Hotuta T."/>
            <person name="Kusano J."/>
            <person name="Kanehori K."/>
            <person name="Takahashi-Fujii A."/>
            <person name="Hara H."/>
            <person name="Tanase T.-O."/>
            <person name="Nomura Y."/>
            <person name="Togiya S."/>
            <person name="Komai F."/>
            <person name="Hara R."/>
            <person name="Takeuchi K."/>
            <person name="Arita M."/>
            <person name="Imose N."/>
            <person name="Musashino K."/>
            <person name="Yuuki H."/>
            <person name="Oshima A."/>
            <person name="Sasaki N."/>
            <person name="Aotsuka S."/>
            <person name="Yoshikawa Y."/>
            <person name="Matsunawa H."/>
            <person name="Ichihara T."/>
            <person name="Shiohata N."/>
            <person name="Sano S."/>
            <person name="Moriya S."/>
            <person name="Momiyama H."/>
            <person name="Satoh N."/>
            <person name="Takami S."/>
            <person name="Terashima Y."/>
            <person name="Suzuki O."/>
            <person name="Nakagawa S."/>
            <person name="Senoh A."/>
            <person name="Mizoguchi H."/>
            <person name="Goto Y."/>
            <person name="Shimizu F."/>
            <person name="Wakebe H."/>
            <person name="Hishigaki H."/>
            <person name="Watanabe T."/>
            <person name="Sugiyama A."/>
            <person name="Takemoto M."/>
            <person name="Kawakami B."/>
            <person name="Yamazaki M."/>
            <person name="Watanabe K."/>
            <person name="Kumagai A."/>
            <person name="Itakura S."/>
            <person name="Fukuzumi Y."/>
            <person name="Fujimori Y."/>
            <person name="Komiyama M."/>
            <person name="Tashiro H."/>
            <person name="Tanigami A."/>
            <person name="Fujiwara T."/>
            <person name="Ono T."/>
            <person name="Yamada K."/>
            <person name="Fujii Y."/>
            <person name="Ozaki K."/>
            <person name="Hirao M."/>
            <person name="Ohmori Y."/>
            <person name="Kawabata A."/>
            <person name="Hikiji T."/>
            <person name="Kobatake N."/>
            <person name="Inagaki H."/>
            <person name="Ikema Y."/>
            <person name="Okamoto S."/>
            <person name="Okitani R."/>
            <person name="Kawakami T."/>
            <person name="Noguchi S."/>
            <person name="Itoh T."/>
            <person name="Shigeta K."/>
            <person name="Senba T."/>
            <person name="Matsumura K."/>
            <person name="Nakajima Y."/>
            <person name="Mizuno T."/>
            <person name="Morinaga M."/>
            <person name="Sasaki M."/>
            <person name="Togashi T."/>
            <person name="Oyama M."/>
            <person name="Hata H."/>
            <person name="Watanabe M."/>
            <person name="Komatsu T."/>
            <person name="Mizushima-Sugano J."/>
            <person name="Satoh T."/>
            <person name="Shirai Y."/>
            <person name="Takahashi Y."/>
            <person name="Nakagawa K."/>
            <person name="Okumura K."/>
            <person name="Nagase T."/>
            <person name="Nomura N."/>
            <person name="Kikuchi H."/>
            <person name="Masuho Y."/>
            <person name="Yamashita R."/>
            <person name="Nakai K."/>
            <person name="Yada T."/>
            <person name="Nakamura Y."/>
            <person name="Ohara O."/>
            <person name="Isogai T."/>
            <person name="Sugano S."/>
        </authorList>
    </citation>
    <scope>NUCLEOTIDE SEQUENCE [LARGE SCALE MRNA] (ISOFORMS 1 AND 3)</scope>
    <source>
        <tissue>Thymus</tissue>
    </source>
</reference>
<reference key="3">
    <citation type="journal article" date="2004" name="Nature">
        <title>DNA sequence and analysis of human chromosome 9.</title>
        <authorList>
            <person name="Humphray S.J."/>
            <person name="Oliver K."/>
            <person name="Hunt A.R."/>
            <person name="Plumb R.W."/>
            <person name="Loveland J.E."/>
            <person name="Howe K.L."/>
            <person name="Andrews T.D."/>
            <person name="Searle S."/>
            <person name="Hunt S.E."/>
            <person name="Scott C.E."/>
            <person name="Jones M.C."/>
            <person name="Ainscough R."/>
            <person name="Almeida J.P."/>
            <person name="Ambrose K.D."/>
            <person name="Ashwell R.I.S."/>
            <person name="Babbage A.K."/>
            <person name="Babbage S."/>
            <person name="Bagguley C.L."/>
            <person name="Bailey J."/>
            <person name="Banerjee R."/>
            <person name="Barker D.J."/>
            <person name="Barlow K.F."/>
            <person name="Bates K."/>
            <person name="Beasley H."/>
            <person name="Beasley O."/>
            <person name="Bird C.P."/>
            <person name="Bray-Allen S."/>
            <person name="Brown A.J."/>
            <person name="Brown J.Y."/>
            <person name="Burford D."/>
            <person name="Burrill W."/>
            <person name="Burton J."/>
            <person name="Carder C."/>
            <person name="Carter N.P."/>
            <person name="Chapman J.C."/>
            <person name="Chen Y."/>
            <person name="Clarke G."/>
            <person name="Clark S.Y."/>
            <person name="Clee C.M."/>
            <person name="Clegg S."/>
            <person name="Collier R.E."/>
            <person name="Corby N."/>
            <person name="Crosier M."/>
            <person name="Cummings A.T."/>
            <person name="Davies J."/>
            <person name="Dhami P."/>
            <person name="Dunn M."/>
            <person name="Dutta I."/>
            <person name="Dyer L.W."/>
            <person name="Earthrowl M.E."/>
            <person name="Faulkner L."/>
            <person name="Fleming C.J."/>
            <person name="Frankish A."/>
            <person name="Frankland J.A."/>
            <person name="French L."/>
            <person name="Fricker D.G."/>
            <person name="Garner P."/>
            <person name="Garnett J."/>
            <person name="Ghori J."/>
            <person name="Gilbert J.G.R."/>
            <person name="Glison C."/>
            <person name="Grafham D.V."/>
            <person name="Gribble S."/>
            <person name="Griffiths C."/>
            <person name="Griffiths-Jones S."/>
            <person name="Grocock R."/>
            <person name="Guy J."/>
            <person name="Hall R.E."/>
            <person name="Hammond S."/>
            <person name="Harley J.L."/>
            <person name="Harrison E.S.I."/>
            <person name="Hart E.A."/>
            <person name="Heath P.D."/>
            <person name="Henderson C.D."/>
            <person name="Hopkins B.L."/>
            <person name="Howard P.J."/>
            <person name="Howden P.J."/>
            <person name="Huckle E."/>
            <person name="Johnson C."/>
            <person name="Johnson D."/>
            <person name="Joy A.A."/>
            <person name="Kay M."/>
            <person name="Keenan S."/>
            <person name="Kershaw J.K."/>
            <person name="Kimberley A.M."/>
            <person name="King A."/>
            <person name="Knights A."/>
            <person name="Laird G.K."/>
            <person name="Langford C."/>
            <person name="Lawlor S."/>
            <person name="Leongamornlert D.A."/>
            <person name="Leversha M."/>
            <person name="Lloyd C."/>
            <person name="Lloyd D.M."/>
            <person name="Lovell J."/>
            <person name="Martin S."/>
            <person name="Mashreghi-Mohammadi M."/>
            <person name="Matthews L."/>
            <person name="McLaren S."/>
            <person name="McLay K.E."/>
            <person name="McMurray A."/>
            <person name="Milne S."/>
            <person name="Nickerson T."/>
            <person name="Nisbett J."/>
            <person name="Nordsiek G."/>
            <person name="Pearce A.V."/>
            <person name="Peck A.I."/>
            <person name="Porter K.M."/>
            <person name="Pandian R."/>
            <person name="Pelan S."/>
            <person name="Phillimore B."/>
            <person name="Povey S."/>
            <person name="Ramsey Y."/>
            <person name="Rand V."/>
            <person name="Scharfe M."/>
            <person name="Sehra H.K."/>
            <person name="Shownkeen R."/>
            <person name="Sims S.K."/>
            <person name="Skuce C.D."/>
            <person name="Smith M."/>
            <person name="Steward C.A."/>
            <person name="Swarbreck D."/>
            <person name="Sycamore N."/>
            <person name="Tester J."/>
            <person name="Thorpe A."/>
            <person name="Tracey A."/>
            <person name="Tromans A."/>
            <person name="Thomas D.W."/>
            <person name="Wall M."/>
            <person name="Wallis J.M."/>
            <person name="West A.P."/>
            <person name="Whitehead S.L."/>
            <person name="Willey D.L."/>
            <person name="Williams S.A."/>
            <person name="Wilming L."/>
            <person name="Wray P.W."/>
            <person name="Young L."/>
            <person name="Ashurst J.L."/>
            <person name="Coulson A."/>
            <person name="Blocker H."/>
            <person name="Durbin R.M."/>
            <person name="Sulston J.E."/>
            <person name="Hubbard T."/>
            <person name="Jackson M.J."/>
            <person name="Bentley D.R."/>
            <person name="Beck S."/>
            <person name="Rogers J."/>
            <person name="Dunham I."/>
        </authorList>
    </citation>
    <scope>NUCLEOTIDE SEQUENCE [LARGE SCALE GENOMIC DNA]</scope>
</reference>
<reference key="4">
    <citation type="submission" date="2005-07" db="EMBL/GenBank/DDBJ databases">
        <authorList>
            <person name="Mural R.J."/>
            <person name="Istrail S."/>
            <person name="Sutton G.G."/>
            <person name="Florea L."/>
            <person name="Halpern A.L."/>
            <person name="Mobarry C.M."/>
            <person name="Lippert R."/>
            <person name="Walenz B."/>
            <person name="Shatkay H."/>
            <person name="Dew I."/>
            <person name="Miller J.R."/>
            <person name="Flanigan M.J."/>
            <person name="Edwards N.J."/>
            <person name="Bolanos R."/>
            <person name="Fasulo D."/>
            <person name="Halldorsson B.V."/>
            <person name="Hannenhalli S."/>
            <person name="Turner R."/>
            <person name="Yooseph S."/>
            <person name="Lu F."/>
            <person name="Nusskern D.R."/>
            <person name="Shue B.C."/>
            <person name="Zheng X.H."/>
            <person name="Zhong F."/>
            <person name="Delcher A.L."/>
            <person name="Huson D.H."/>
            <person name="Kravitz S.A."/>
            <person name="Mouchard L."/>
            <person name="Reinert K."/>
            <person name="Remington K.A."/>
            <person name="Clark A.G."/>
            <person name="Waterman M.S."/>
            <person name="Eichler E.E."/>
            <person name="Adams M.D."/>
            <person name="Hunkapiller M.W."/>
            <person name="Myers E.W."/>
            <person name="Venter J.C."/>
        </authorList>
    </citation>
    <scope>NUCLEOTIDE SEQUENCE [LARGE SCALE GENOMIC DNA]</scope>
</reference>
<reference key="5">
    <citation type="journal article" date="2004" name="Genome Res.">
        <title>The status, quality, and expansion of the NIH full-length cDNA project: the Mammalian Gene Collection (MGC).</title>
        <authorList>
            <consortium name="The MGC Project Team"/>
        </authorList>
    </citation>
    <scope>NUCLEOTIDE SEQUENCE [LARGE SCALE MRNA] (ISOFORM 3)</scope>
</reference>
<reference key="6">
    <citation type="journal article" date="1994" name="Hum. Mol. Genet.">
        <title>The Friedreich ataxia region: characterization of two novel genes and reduction of the critical region to 300 kb.</title>
        <authorList>
            <person name="Duclos F."/>
            <person name="Rodius F."/>
            <person name="Wrogemann K."/>
            <person name="Mandel J.-L."/>
            <person name="Koenig M."/>
        </authorList>
    </citation>
    <scope>NUCLEOTIDE SEQUENCE [MRNA] OF 286-450 (ISOFORM 1)</scope>
    <scope>TISSUE SPECIFICITY</scope>
    <source>
        <tissue>Brain</tissue>
    </source>
</reference>
<reference key="7">
    <citation type="journal article" date="2011" name="Sci. Signal.">
        <title>System-wide temporal characterization of the proteome and phosphoproteome of human embryonic stem cell differentiation.</title>
        <authorList>
            <person name="Rigbolt K.T."/>
            <person name="Prokhorova T.A."/>
            <person name="Akimov V."/>
            <person name="Henningsen J."/>
            <person name="Johansen P.T."/>
            <person name="Kratchmarova I."/>
            <person name="Kassem M."/>
            <person name="Mann M."/>
            <person name="Olsen J.V."/>
            <person name="Blagoev B."/>
        </authorList>
    </citation>
    <scope>PHOSPHORYLATION [LARGE SCALE ANALYSIS] AT SER-275</scope>
    <scope>IDENTIFICATION BY MASS SPECTROMETRY [LARGE SCALE ANALYSIS]</scope>
</reference>
<name>EREP1_HUMAN</name>
<protein>
    <recommendedName>
        <fullName evidence="10">Endosomal transmembrane epsin interactor 1</fullName>
    </recommendedName>
    <alternativeName>
        <fullName evidence="6">Endosomal transmembrane binding with epsin</fullName>
    </alternativeName>
</protein>
<accession>Q15884</accession>
<accession>A0A0A0MR12</accession>
<accession>A0A6F8PH59</accession>
<accession>Q14CN5</accession>
<accession>Q5T6C8</accession>
<accession>Q5T6C9</accession>
<accession>Q6ZTX4</accession>
<accession>Q96N10</accession>
<keyword id="KW-0025">Alternative splicing</keyword>
<keyword id="KW-1003">Cell membrane</keyword>
<keyword id="KW-0967">Endosome</keyword>
<keyword id="KW-1017">Isopeptide bond</keyword>
<keyword id="KW-0472">Membrane</keyword>
<keyword id="KW-0597">Phosphoprotein</keyword>
<keyword id="KW-1267">Proteomics identification</keyword>
<keyword id="KW-1185">Reference proteome</keyword>
<keyword id="KW-0732">Signal</keyword>
<keyword id="KW-0812">Transmembrane</keyword>
<keyword id="KW-1133">Transmembrane helix</keyword>
<keyword id="KW-0832">Ubl conjugation</keyword>
<gene>
    <name evidence="10" type="primary">ENTREP1</name>
    <name evidence="10" type="synonym">C9orf61</name>
    <name evidence="10" type="synonym">FAM189A2</name>
    <name evidence="7" type="synonym">X123</name>
</gene>
<feature type="signal peptide" evidence="1">
    <location>
        <begin position="1"/>
        <end position="29"/>
    </location>
</feature>
<feature type="chain" id="PRO_0000089698" description="Endosomal transmembrane epsin interactor 1">
    <location>
        <begin position="30"/>
        <end position="450"/>
    </location>
</feature>
<feature type="topological domain" description="Lumenal" evidence="9">
    <location>
        <begin position="30"/>
        <end position="85"/>
    </location>
</feature>
<feature type="transmembrane region" description="Helical" evidence="1">
    <location>
        <begin position="86"/>
        <end position="106"/>
    </location>
</feature>
<feature type="topological domain" description="Cytoplasmic" evidence="9">
    <location>
        <begin position="107"/>
        <end position="450"/>
    </location>
</feature>
<feature type="region of interest" description="Mediates interaction with EPN1" evidence="3">
    <location>
        <begin position="107"/>
        <end position="450"/>
    </location>
</feature>
<feature type="region of interest" description="Disordered" evidence="2">
    <location>
        <begin position="235"/>
        <end position="284"/>
    </location>
</feature>
<feature type="short sequence motif" description="PPxY; mediates interaction with ITCH" evidence="3">
    <location>
        <begin position="148"/>
        <end position="151"/>
    </location>
</feature>
<feature type="short sequence motif" description="PPxY; mediates interaction with ITCH" evidence="3">
    <location>
        <begin position="194"/>
        <end position="197"/>
    </location>
</feature>
<feature type="compositionally biased region" description="Polar residues" evidence="2">
    <location>
        <begin position="246"/>
        <end position="256"/>
    </location>
</feature>
<feature type="compositionally biased region" description="Basic and acidic residues" evidence="2">
    <location>
        <begin position="273"/>
        <end position="284"/>
    </location>
</feature>
<feature type="modified residue" description="Phosphoserine" evidence="11">
    <location>
        <position position="275"/>
    </location>
</feature>
<feature type="cross-link" description="Glycyl lysine isopeptide (Lys-Gly) (interchain with G-Cter in ubiquitin)" evidence="3">
    <location>
        <position position="274"/>
    </location>
</feature>
<feature type="cross-link" description="Glycyl lysine isopeptide (Lys-Gly) (interchain with G-Cter in ubiquitin)" evidence="3">
    <location>
        <position position="329"/>
    </location>
</feature>
<feature type="cross-link" description="Glycyl lysine isopeptide (Lys-Gly) (interchain with G-Cter in ubiquitin)" evidence="3">
    <location>
        <position position="365"/>
    </location>
</feature>
<feature type="splice variant" id="VSP_035737" description="In isoform 1." evidence="5">
    <location>
        <begin position="1"/>
        <end position="161"/>
    </location>
</feature>
<feature type="splice variant" id="VSP_061674" description="In isoform 4.">
    <original>M</original>
    <variation>MSLPVVLPGSCCPVAGLSGGPQAGGPGAAAAAAQEPPLPPLRPRWPRGALQPPSRPRCAATAAAGVLAAPPALSSRRAVAAAAAAAPGSALLPARPLLSLGLLQLILGCCMVALSFGALSLSSSPQVKNSCPFWAGSSVILSGIIGLTTWKRPM</variation>
    <location>
        <position position="1"/>
    </location>
</feature>
<feature type="sequence variant" id="VAR_047364" description="In dbSNP:rs35386391.">
    <original>T</original>
    <variation>I</variation>
    <location>
        <position position="233"/>
    </location>
</feature>
<feature type="sequence variant" id="VAR_050823" description="In dbSNP:rs11138396.">
    <original>R</original>
    <variation>K</variation>
    <location>
        <position position="261"/>
    </location>
</feature>
<feature type="mutagenesis site" description="Decreased interaction with ITCH and no effect on interaction with EPN1; when associated with A-197." evidence="3">
    <original>Y</original>
    <variation>A</variation>
    <location>
        <position position="151"/>
    </location>
</feature>
<feature type="mutagenesis site" description="Decreased interaction with ITCH and no effect on interaction with EPN1; when associated with A-151." evidence="3">
    <original>Y</original>
    <variation>A</variation>
    <location>
        <position position="197"/>
    </location>
</feature>
<feature type="sequence conflict" description="In Ref. 2; BAB71105." evidence="8" ref="2">
    <original>T</original>
    <variation>I</variation>
    <location>
        <position position="230"/>
    </location>
</feature>
<feature type="sequence conflict" description="In Ref. 6; AAA61301." evidence="8" ref="6">
    <original>Y</original>
    <variation>D</variation>
    <location>
        <position position="328"/>
    </location>
</feature>
<feature type="sequence conflict" description="In Ref. 2; BAC86453." evidence="8" ref="2">
    <original>K</original>
    <variation>R</variation>
    <location>
        <position position="397"/>
    </location>
</feature>
<feature type="sequence conflict" description="In Ref. 6; AAA61301." evidence="8" ref="6">
    <original>S</original>
    <variation>L</variation>
    <location>
        <position position="400"/>
    </location>
</feature>
<feature type="sequence conflict" description="In Ref. 6; AAA61301." evidence="8" ref="6">
    <original>F</original>
    <variation>I</variation>
    <location>
        <position position="418"/>
    </location>
</feature>
<feature type="sequence conflict" description="In Ref. 6; AAA61301." evidence="8" ref="6">
    <original>P</original>
    <variation>S</variation>
    <location>
        <position position="438"/>
    </location>
</feature>
<organism>
    <name type="scientific">Homo sapiens</name>
    <name type="common">Human</name>
    <dbReference type="NCBI Taxonomy" id="9606"/>
    <lineage>
        <taxon>Eukaryota</taxon>
        <taxon>Metazoa</taxon>
        <taxon>Chordata</taxon>
        <taxon>Craniata</taxon>
        <taxon>Vertebrata</taxon>
        <taxon>Euteleostomi</taxon>
        <taxon>Mammalia</taxon>
        <taxon>Eutheria</taxon>
        <taxon>Euarchontoglires</taxon>
        <taxon>Primates</taxon>
        <taxon>Haplorrhini</taxon>
        <taxon>Catarrhini</taxon>
        <taxon>Hominidae</taxon>
        <taxon>Homo</taxon>
    </lineage>
</organism>
<dbReference type="EMBL" id="LC496047">
    <property type="protein sequence ID" value="BBM96371.1"/>
    <property type="molecule type" value="mRNA"/>
</dbReference>
<dbReference type="EMBL" id="AK056152">
    <property type="protein sequence ID" value="BAB71105.1"/>
    <property type="molecule type" value="mRNA"/>
</dbReference>
<dbReference type="EMBL" id="AK126127">
    <property type="protein sequence ID" value="BAC86453.1"/>
    <property type="molecule type" value="mRNA"/>
</dbReference>
<dbReference type="EMBL" id="AL355140">
    <property type="status" value="NOT_ANNOTATED_CDS"/>
    <property type="molecule type" value="Genomic_DNA"/>
</dbReference>
<dbReference type="EMBL" id="CH471089">
    <property type="protein sequence ID" value="EAW62483.1"/>
    <property type="molecule type" value="Genomic_DNA"/>
</dbReference>
<dbReference type="EMBL" id="BC113683">
    <property type="protein sequence ID" value="AAI13684.1"/>
    <property type="molecule type" value="mRNA"/>
</dbReference>
<dbReference type="EMBL" id="BC113685">
    <property type="protein sequence ID" value="AAI13686.1"/>
    <property type="molecule type" value="mRNA"/>
</dbReference>
<dbReference type="EMBL" id="L27479">
    <property type="protein sequence ID" value="AAA61301.1"/>
    <property type="status" value="ALT_SEQ"/>
    <property type="molecule type" value="mRNA"/>
</dbReference>
<dbReference type="CCDS" id="CCDS6629.1">
    <molecule id="Q15884-3"/>
</dbReference>
<dbReference type="CCDS" id="CCDS87658.1">
    <molecule id="Q15884-4"/>
</dbReference>
<dbReference type="PIR" id="I68673">
    <property type="entry name" value="I68673"/>
</dbReference>
<dbReference type="RefSeq" id="NP_001121080.1">
    <molecule id="Q15884-3"/>
    <property type="nucleotide sequence ID" value="NM_001127608.3"/>
</dbReference>
<dbReference type="RefSeq" id="NP_001334924.1">
    <molecule id="Q15884-4"/>
    <property type="nucleotide sequence ID" value="NM_001347995.2"/>
</dbReference>
<dbReference type="RefSeq" id="NP_004807.3">
    <molecule id="Q15884-3"/>
    <property type="nucleotide sequence ID" value="NM_004816.4"/>
</dbReference>
<dbReference type="RefSeq" id="XP_024303486.1">
    <molecule id="Q15884-3"/>
    <property type="nucleotide sequence ID" value="XM_024447718.2"/>
</dbReference>
<dbReference type="RefSeq" id="XP_054220166.1">
    <molecule id="Q15884-3"/>
    <property type="nucleotide sequence ID" value="XM_054364191.1"/>
</dbReference>
<dbReference type="SMR" id="Q15884"/>
<dbReference type="BioGRID" id="114808">
    <property type="interactions" value="83"/>
</dbReference>
<dbReference type="FunCoup" id="Q15884">
    <property type="interactions" value="9"/>
</dbReference>
<dbReference type="IntAct" id="Q15884">
    <property type="interactions" value="96"/>
</dbReference>
<dbReference type="MINT" id="Q15884"/>
<dbReference type="STRING" id="9606.ENSP00000304435"/>
<dbReference type="GlyGen" id="Q15884">
    <property type="glycosylation" value="1 site"/>
</dbReference>
<dbReference type="iPTMnet" id="Q15884"/>
<dbReference type="PhosphoSitePlus" id="Q15884"/>
<dbReference type="BioMuta" id="FAM189A2"/>
<dbReference type="DMDM" id="215274176"/>
<dbReference type="jPOST" id="Q15884"/>
<dbReference type="MassIVE" id="Q15884"/>
<dbReference type="PaxDb" id="9606-ENSP00000257515"/>
<dbReference type="PeptideAtlas" id="Q15884"/>
<dbReference type="ProteomicsDB" id="60803">
    <molecule id="Q15884-3"/>
</dbReference>
<dbReference type="ProteomicsDB" id="60804">
    <molecule id="Q15884-1"/>
</dbReference>
<dbReference type="Antibodypedia" id="26830">
    <property type="antibodies" value="44 antibodies from 15 providers"/>
</dbReference>
<dbReference type="DNASU" id="9413"/>
<dbReference type="Ensembl" id="ENST00000257515.12">
    <molecule id="Q15884-3"/>
    <property type="protein sequence ID" value="ENSP00000257515.8"/>
    <property type="gene ID" value="ENSG00000135063.20"/>
</dbReference>
<dbReference type="Ensembl" id="ENST00000303068.14">
    <molecule id="Q15884-4"/>
    <property type="protein sequence ID" value="ENSP00000304435.8"/>
    <property type="gene ID" value="ENSG00000135063.20"/>
</dbReference>
<dbReference type="Ensembl" id="ENST00000455972.6">
    <molecule id="Q15884-3"/>
    <property type="protein sequence ID" value="ENSP00000395675.1"/>
    <property type="gene ID" value="ENSG00000135063.20"/>
</dbReference>
<dbReference type="GeneID" id="9413"/>
<dbReference type="KEGG" id="hsa:9413"/>
<dbReference type="MANE-Select" id="ENST00000303068.14">
    <molecule id="Q15884-4"/>
    <property type="protein sequence ID" value="ENSP00000304435.8"/>
    <property type="RefSeq nucleotide sequence ID" value="NM_001347995.2"/>
    <property type="RefSeq protein sequence ID" value="NP_001334924.1"/>
</dbReference>
<dbReference type="UCSC" id="uc004ahg.2">
    <molecule id="Q15884-3"/>
    <property type="organism name" value="human"/>
</dbReference>
<dbReference type="AGR" id="HGNC:24820"/>
<dbReference type="CTD" id="9413"/>
<dbReference type="DisGeNET" id="9413"/>
<dbReference type="GeneCards" id="ENTREP1"/>
<dbReference type="HGNC" id="HGNC:24820">
    <property type="gene designation" value="ENTREP1"/>
</dbReference>
<dbReference type="HPA" id="ENSG00000135063">
    <property type="expression patterns" value="Tissue enhanced (skeletal muscle, thyroid gland)"/>
</dbReference>
<dbReference type="MalaCards" id="ENTREP1"/>
<dbReference type="MIM" id="607710">
    <property type="type" value="gene"/>
</dbReference>
<dbReference type="neXtProt" id="NX_Q15884"/>
<dbReference type="OpenTargets" id="ENSG00000135063"/>
<dbReference type="PharmGKB" id="PA165585777"/>
<dbReference type="VEuPathDB" id="HostDB:ENSG00000135063"/>
<dbReference type="eggNOG" id="ENOG502QS0Q">
    <property type="taxonomic scope" value="Eukaryota"/>
</dbReference>
<dbReference type="GeneTree" id="ENSGT00530000063335"/>
<dbReference type="HOGENOM" id="CLU_025607_2_0_1"/>
<dbReference type="InParanoid" id="Q15884"/>
<dbReference type="OMA" id="PCIDESQ"/>
<dbReference type="OrthoDB" id="16384at9604"/>
<dbReference type="PAN-GO" id="Q15884">
    <property type="GO annotations" value="0 GO annotations based on evolutionary models"/>
</dbReference>
<dbReference type="PhylomeDB" id="Q15884"/>
<dbReference type="TreeFam" id="TF332736"/>
<dbReference type="PathwayCommons" id="Q15884"/>
<dbReference type="SignaLink" id="Q15884"/>
<dbReference type="BioGRID-ORCS" id="9413">
    <property type="hits" value="14 hits in 1156 CRISPR screens"/>
</dbReference>
<dbReference type="ChiTaRS" id="FAM189A2">
    <property type="organism name" value="human"/>
</dbReference>
<dbReference type="GenomeRNAi" id="9413"/>
<dbReference type="Pharos" id="Q15884">
    <property type="development level" value="Tdark"/>
</dbReference>
<dbReference type="PRO" id="PR:Q15884"/>
<dbReference type="Proteomes" id="UP000005640">
    <property type="component" value="Chromosome 9"/>
</dbReference>
<dbReference type="RNAct" id="Q15884">
    <property type="molecule type" value="protein"/>
</dbReference>
<dbReference type="Bgee" id="ENSG00000135063">
    <property type="expression patterns" value="Expressed in left lobe of thyroid gland and 161 other cell types or tissues"/>
</dbReference>
<dbReference type="ExpressionAtlas" id="Q15884">
    <property type="expression patterns" value="baseline and differential"/>
</dbReference>
<dbReference type="GO" id="GO:0031901">
    <property type="term" value="C:early endosome membrane"/>
    <property type="evidence" value="ECO:0000314"/>
    <property type="project" value="UniProtKB"/>
</dbReference>
<dbReference type="GO" id="GO:0031902">
    <property type="term" value="C:late endosome membrane"/>
    <property type="evidence" value="ECO:0000314"/>
    <property type="project" value="UniProtKB"/>
</dbReference>
<dbReference type="GO" id="GO:0005886">
    <property type="term" value="C:plasma membrane"/>
    <property type="evidence" value="ECO:0000314"/>
    <property type="project" value="UniProtKB"/>
</dbReference>
<dbReference type="GO" id="GO:0055038">
    <property type="term" value="C:recycling endosome membrane"/>
    <property type="evidence" value="ECO:0000314"/>
    <property type="project" value="UniProtKB"/>
</dbReference>
<dbReference type="GO" id="GO:1990757">
    <property type="term" value="F:ubiquitin ligase activator activity"/>
    <property type="evidence" value="ECO:0000314"/>
    <property type="project" value="UniProtKB"/>
</dbReference>
<dbReference type="GO" id="GO:0038160">
    <property type="term" value="P:CXCL12-activated CXCR4 signaling pathway"/>
    <property type="evidence" value="ECO:0000315"/>
    <property type="project" value="UniProtKB"/>
</dbReference>
<dbReference type="GO" id="GO:0022401">
    <property type="term" value="P:negative adaptation of signaling pathway"/>
    <property type="evidence" value="ECO:0000315"/>
    <property type="project" value="UniProtKB"/>
</dbReference>
<dbReference type="GO" id="GO:0031623">
    <property type="term" value="P:receptor internalization"/>
    <property type="evidence" value="ECO:0000315"/>
    <property type="project" value="UniProtKB"/>
</dbReference>
<dbReference type="InterPro" id="IPR030431">
    <property type="entry name" value="ENTREP1-3"/>
</dbReference>
<dbReference type="PANTHER" id="PTHR17615:SF8">
    <property type="entry name" value="ENDOSOMAL TRANSMEMBRANE EPSIN INTERACTOR 1"/>
    <property type="match status" value="1"/>
</dbReference>
<dbReference type="PANTHER" id="PTHR17615">
    <property type="entry name" value="PROTEIN FAM189A"/>
    <property type="match status" value="1"/>
</dbReference>
<sequence length="450" mass="49703">MILLVNLFVLLSVVCVLLNLAGFILGCQGAQFVSSVPRCDLVDLGEGKICFCCEEFQPAKCTDKENALKLFPVQPCSAVHLLLKKVLFALCALNALTTTVCLVAAALRYLQIFATRRSCIDESQISAEEAEDHGRIPDPDDFVPPVPPPSYFATFYSCTPRMNRRMVGPDVIPLPHIYGARIKGVEVFCPLDPPPPYEAVVSQMDQEQGSSFQMSEGSEAAVIPLDLGCTQVTQDGDIPNIPAEENASTSTPSSTLVRPIRSRRALPPLRTRSKSDPVLHPSEERAAPVLSCEAATQTERRLDLAAVTLRRGLRSRASRCRPRSLIDYKSYMDTKLLVARFLEQSSCTMTPDIHELVENIKSVLKSDEEHMEEAITSASFLEQIMAPLQPSTSRAHKLPSRRQPGLLHLQSCGDLHTFTPAGRPRAERRPRRVEAERPHSLIGVIRETVL</sequence>